<dbReference type="EC" id="3.6.4.-" evidence="1"/>
<dbReference type="EMBL" id="AB027510">
    <property type="protein sequence ID" value="BAA77815.1"/>
    <property type="molecule type" value="mRNA"/>
</dbReference>
<dbReference type="EMBL" id="AF156157">
    <property type="protein sequence ID" value="AAD38853.1"/>
    <property type="molecule type" value="Genomic_DNA"/>
</dbReference>
<dbReference type="SMR" id="Q9Y702"/>
<dbReference type="VEuPathDB" id="FungiDB:SCHCODRAFT_02645649"/>
<dbReference type="OMA" id="FHTTAER"/>
<dbReference type="GO" id="GO:0005737">
    <property type="term" value="C:cytoplasm"/>
    <property type="evidence" value="ECO:0007669"/>
    <property type="project" value="UniProtKB-KW"/>
</dbReference>
<dbReference type="GO" id="GO:0005856">
    <property type="term" value="C:cytoskeleton"/>
    <property type="evidence" value="ECO:0007669"/>
    <property type="project" value="UniProtKB-SubCell"/>
</dbReference>
<dbReference type="GO" id="GO:0005524">
    <property type="term" value="F:ATP binding"/>
    <property type="evidence" value="ECO:0007669"/>
    <property type="project" value="UniProtKB-KW"/>
</dbReference>
<dbReference type="GO" id="GO:0016787">
    <property type="term" value="F:hydrolase activity"/>
    <property type="evidence" value="ECO:0007669"/>
    <property type="project" value="UniProtKB-KW"/>
</dbReference>
<dbReference type="CDD" id="cd10224">
    <property type="entry name" value="ASKHA_NBD_actin"/>
    <property type="match status" value="1"/>
</dbReference>
<dbReference type="FunFam" id="3.30.420.40:FF:000291">
    <property type="entry name" value="Actin, alpha skeletal muscle"/>
    <property type="match status" value="1"/>
</dbReference>
<dbReference type="FunFam" id="3.90.640.10:FF:000001">
    <property type="entry name" value="Actin, muscle"/>
    <property type="match status" value="1"/>
</dbReference>
<dbReference type="FunFam" id="3.30.420.40:FF:000404">
    <property type="entry name" value="Major actin"/>
    <property type="match status" value="1"/>
</dbReference>
<dbReference type="FunFam" id="3.30.420.40:FF:000058">
    <property type="entry name" value="Putative actin-related protein 5"/>
    <property type="match status" value="1"/>
</dbReference>
<dbReference type="Gene3D" id="3.30.420.40">
    <property type="match status" value="2"/>
</dbReference>
<dbReference type="Gene3D" id="3.90.640.10">
    <property type="entry name" value="Actin, Chain A, domain 4"/>
    <property type="match status" value="1"/>
</dbReference>
<dbReference type="InterPro" id="IPR004000">
    <property type="entry name" value="Actin"/>
</dbReference>
<dbReference type="InterPro" id="IPR020902">
    <property type="entry name" value="Actin/actin-like_CS"/>
</dbReference>
<dbReference type="InterPro" id="IPR004001">
    <property type="entry name" value="Actin_CS"/>
</dbReference>
<dbReference type="InterPro" id="IPR043129">
    <property type="entry name" value="ATPase_NBD"/>
</dbReference>
<dbReference type="PANTHER" id="PTHR11937">
    <property type="entry name" value="ACTIN"/>
    <property type="match status" value="1"/>
</dbReference>
<dbReference type="Pfam" id="PF00022">
    <property type="entry name" value="Actin"/>
    <property type="match status" value="1"/>
</dbReference>
<dbReference type="PRINTS" id="PR00190">
    <property type="entry name" value="ACTIN"/>
</dbReference>
<dbReference type="SMART" id="SM00268">
    <property type="entry name" value="ACTIN"/>
    <property type="match status" value="1"/>
</dbReference>
<dbReference type="SUPFAM" id="SSF53067">
    <property type="entry name" value="Actin-like ATPase domain"/>
    <property type="match status" value="2"/>
</dbReference>
<dbReference type="PROSITE" id="PS00406">
    <property type="entry name" value="ACTINS_1"/>
    <property type="match status" value="1"/>
</dbReference>
<dbReference type="PROSITE" id="PS00432">
    <property type="entry name" value="ACTINS_2"/>
    <property type="match status" value="1"/>
</dbReference>
<dbReference type="PROSITE" id="PS01132">
    <property type="entry name" value="ACTINS_ACT_LIKE"/>
    <property type="match status" value="1"/>
</dbReference>
<evidence type="ECO:0000250" key="1">
    <source>
        <dbReference type="UniProtKB" id="P60010"/>
    </source>
</evidence>
<evidence type="ECO:0000305" key="2"/>
<protein>
    <recommendedName>
        <fullName>Actin-1</fullName>
        <ecNumber evidence="1">3.6.4.-</ecNumber>
    </recommendedName>
    <alternativeName>
        <fullName>Beta-actin</fullName>
    </alternativeName>
</protein>
<gene>
    <name type="primary">ACT1</name>
</gene>
<accession>Q9Y702</accession>
<reference key="1">
    <citation type="submission" date="1999-05" db="EMBL/GenBank/DDBJ databases">
        <title>Schizophyllum commune beta-actin mRNA.</title>
        <authorList>
            <person name="Yamagishi K."/>
            <person name="Kimura T."/>
            <person name="Shinmoto H."/>
        </authorList>
    </citation>
    <scope>NUCLEOTIDE SEQUENCE</scope>
    <source>
        <strain>NBRC 30496</strain>
    </source>
</reference>
<reference key="2">
    <citation type="journal article" date="2000" name="Gene">
        <title>Molecular characterization of actin genes from homobasidiomycetes: two different actin genes from Schizophyllum commune and Suillus bovinus.</title>
        <authorList>
            <person name="Tarkka M.T."/>
            <person name="Vasara R."/>
            <person name="Gorfer M."/>
            <person name="Raudaskoski M."/>
        </authorList>
    </citation>
    <scope>NUCLEOTIDE SEQUENCE</scope>
    <source>
        <strain>ATCC 44201 / CBS 340.81 / UVM 4-40 / 4-40</strain>
    </source>
</reference>
<name>ACT1_SCHCO</name>
<feature type="chain" id="PRO_0000089002" description="Actin-1">
    <location>
        <begin position="1"/>
        <end position="375"/>
    </location>
</feature>
<proteinExistence type="evidence at transcript level"/>
<comment type="function">
    <text>Actins are highly conserved proteins that are involved in various types of cell motility and are ubiquitously expressed in all eukaryotic cells.</text>
</comment>
<comment type="catalytic activity">
    <reaction evidence="1">
        <text>ATP + H2O = ADP + phosphate + H(+)</text>
        <dbReference type="Rhea" id="RHEA:13065"/>
        <dbReference type="ChEBI" id="CHEBI:15377"/>
        <dbReference type="ChEBI" id="CHEBI:15378"/>
        <dbReference type="ChEBI" id="CHEBI:30616"/>
        <dbReference type="ChEBI" id="CHEBI:43474"/>
        <dbReference type="ChEBI" id="CHEBI:456216"/>
    </reaction>
</comment>
<comment type="subcellular location">
    <subcellularLocation>
        <location>Cytoplasm</location>
        <location>Cytoskeleton</location>
    </subcellularLocation>
</comment>
<comment type="similarity">
    <text evidence="2">Belongs to the actin family.</text>
</comment>
<keyword id="KW-0067">ATP-binding</keyword>
<keyword id="KW-0963">Cytoplasm</keyword>
<keyword id="KW-0206">Cytoskeleton</keyword>
<keyword id="KW-0378">Hydrolase</keyword>
<keyword id="KW-0547">Nucleotide-binding</keyword>
<organism>
    <name type="scientific">Schizophyllum commune</name>
    <name type="common">Split gill fungus</name>
    <dbReference type="NCBI Taxonomy" id="5334"/>
    <lineage>
        <taxon>Eukaryota</taxon>
        <taxon>Fungi</taxon>
        <taxon>Dikarya</taxon>
        <taxon>Basidiomycota</taxon>
        <taxon>Agaricomycotina</taxon>
        <taxon>Agaricomycetes</taxon>
        <taxon>Agaricomycetidae</taxon>
        <taxon>Agaricales</taxon>
        <taxon>Schizophyllaceae</taxon>
        <taxon>Schizophyllum</taxon>
    </lineage>
</organism>
<sequence>MEDEVAALVIDNGSGMCKAGFAGDDAPRAVFPSIVGRPRHQGVMVGMGQKDSYVGDEAQSKRGILTLKYPIEHGIVTNWDDMEKIWHHTFYNELRVAPEEHPVLLTEAPLNPKANREKMTQIMFETFNAPAFYVAIQAVLSLYASGRTTGIVLDSGDGVTHTVPIYEGFALPHAILRLDLAGRDLTDFLIKNLMERGYPFTTTAEREIVRDIKEKLCYVALDFEQELQTAAQSSALEKSYELPDGQVITIGNERFRAPEALFQPAFLGLEAAGIHETTYNSIFKCDLDIRRDLYGNVVLSGGTTMFPGIADRMQKELTALSPSSMKVKIVAPPERKYSVWIGGSILASLSTFQNLWCSKQEYDESGPGIVHRKCF</sequence>